<keyword id="KW-1185">Reference proteome</keyword>
<keyword id="KW-0677">Repeat</keyword>
<sequence length="620" mass="70716">MNVISCSFSLEHNLYETMSCLQRCSKQEELKQIHARMLKTGLMQDSYAITKFLSFCISSTSSDFLPYAQIVFDGFDRPDTFLWNLMIRGFSCSDEPERSLLLYQRMLCSSAPHNAYTFPSLLKACSNLSAFEETTQIHAQITKLGYENDVYAVNSLINSYAVTGNFKLAHLLFDRIPEPDDVSWNSVIKGYVKAGKMDIALTLFRKMAEKNAISWTTMISGYVQADMNKEALQLFHEMQNSDVEPDNVSLANALSACAQLGALEQGKWIHSYLNKTRIRMDSVLGCVLIDMYAKCGEMEEALEVFKNIKKKSVQAWTALISGYAYHGHGREAISKFMEMQKMGIKPNVITFTAVLTACSYTGLVEEGKLIFYSMERDYNLKPTIEHYGCIVDLLGRAGLLDEAKRFIQEMPLKPNAVIWGALLKACRIHKNIELGEEIGEILIAIDPYHGGRYVHKANIHAMDKKWDKAAETRRLMKEQGVAKVPGCSTISLEGTTHEFLAGDRSHPEIEKIQSKWRIMRRKLEENGYVPELEEMLLDLVDDDEREAIVHQHSEKLAITYGLIKTKPGTIIRIMKNLRVCKDCHKVTKLISKIYKRDIVMRDRTRFHHFRDGKCSCGDYW</sequence>
<feature type="chain" id="PRO_0000363586" description="Pentatricopeptide repeat-containing protein At5g66520">
    <location>
        <begin position="1"/>
        <end position="620"/>
    </location>
</feature>
<feature type="repeat" description="PPR 1">
    <location>
        <begin position="79"/>
        <end position="113"/>
    </location>
</feature>
<feature type="repeat" description="PPR 2">
    <location>
        <begin position="114"/>
        <end position="148"/>
    </location>
</feature>
<feature type="repeat" description="PPR 3">
    <location>
        <begin position="149"/>
        <end position="179"/>
    </location>
</feature>
<feature type="repeat" description="PPR 4">
    <location>
        <begin position="180"/>
        <end position="210"/>
    </location>
</feature>
<feature type="repeat" description="PPR 5">
    <location>
        <begin position="211"/>
        <end position="245"/>
    </location>
</feature>
<feature type="repeat" description="PPR 6">
    <location>
        <begin position="246"/>
        <end position="280"/>
    </location>
</feature>
<feature type="repeat" description="PPR 7">
    <location>
        <begin position="281"/>
        <end position="311"/>
    </location>
</feature>
<feature type="repeat" description="PPR 8">
    <location>
        <begin position="312"/>
        <end position="346"/>
    </location>
</feature>
<feature type="repeat" description="PPR 9">
    <location>
        <begin position="347"/>
        <end position="382"/>
    </location>
</feature>
<feature type="repeat" description="PPR 10">
    <location>
        <begin position="383"/>
        <end position="413"/>
    </location>
</feature>
<feature type="region of interest" description="Type E motif">
    <location>
        <begin position="418"/>
        <end position="493"/>
    </location>
</feature>
<feature type="region of interest" description="Type E(+) motif">
    <location>
        <begin position="494"/>
        <end position="524"/>
    </location>
</feature>
<feature type="region of interest" description="Type DYW motif">
    <location>
        <begin position="525"/>
        <end position="620"/>
    </location>
</feature>
<gene>
    <name type="primary">PCMP-H61</name>
    <name type="ordered locus">At5g66520</name>
    <name type="ORF">K1F13.18</name>
</gene>
<comment type="similarity">
    <text evidence="1">Belongs to the PPR family. PCMP-H subfamily.</text>
</comment>
<comment type="online information" name="Pentatricopeptide repeat proteins">
    <link uri="https://ppr.plantenergy.uwa.edu.au"/>
</comment>
<dbReference type="EMBL" id="AB013389">
    <property type="protein sequence ID" value="BAB10928.1"/>
    <property type="molecule type" value="Genomic_DNA"/>
</dbReference>
<dbReference type="EMBL" id="CP002688">
    <property type="protein sequence ID" value="AED98224.1"/>
    <property type="molecule type" value="Genomic_DNA"/>
</dbReference>
<dbReference type="RefSeq" id="NP_201453.1">
    <property type="nucleotide sequence ID" value="NM_126050.2"/>
</dbReference>
<dbReference type="SMR" id="Q9FJY7"/>
<dbReference type="FunCoup" id="Q9FJY7">
    <property type="interactions" value="108"/>
</dbReference>
<dbReference type="STRING" id="3702.Q9FJY7"/>
<dbReference type="PaxDb" id="3702-AT5G66520.1"/>
<dbReference type="ProteomicsDB" id="249330"/>
<dbReference type="EnsemblPlants" id="AT5G66520.1">
    <property type="protein sequence ID" value="AT5G66520.1"/>
    <property type="gene ID" value="AT5G66520"/>
</dbReference>
<dbReference type="GeneID" id="836784"/>
<dbReference type="Gramene" id="AT5G66520.1">
    <property type="protein sequence ID" value="AT5G66520.1"/>
    <property type="gene ID" value="AT5G66520"/>
</dbReference>
<dbReference type="KEGG" id="ath:AT5G66520"/>
<dbReference type="Araport" id="AT5G66520"/>
<dbReference type="TAIR" id="AT5G66520">
    <property type="gene designation" value="CREF7"/>
</dbReference>
<dbReference type="eggNOG" id="KOG4197">
    <property type="taxonomic scope" value="Eukaryota"/>
</dbReference>
<dbReference type="HOGENOM" id="CLU_002706_37_2_1"/>
<dbReference type="InParanoid" id="Q9FJY7"/>
<dbReference type="OMA" id="DPILGCA"/>
<dbReference type="PhylomeDB" id="Q9FJY7"/>
<dbReference type="PRO" id="PR:Q9FJY7"/>
<dbReference type="Proteomes" id="UP000006548">
    <property type="component" value="Chromosome 5"/>
</dbReference>
<dbReference type="ExpressionAtlas" id="Q9FJY7">
    <property type="expression patterns" value="baseline and differential"/>
</dbReference>
<dbReference type="GO" id="GO:0009507">
    <property type="term" value="C:chloroplast"/>
    <property type="evidence" value="ECO:0007669"/>
    <property type="project" value="GOC"/>
</dbReference>
<dbReference type="GO" id="GO:0003729">
    <property type="term" value="F:mRNA binding"/>
    <property type="evidence" value="ECO:0000314"/>
    <property type="project" value="TAIR"/>
</dbReference>
<dbReference type="GO" id="GO:0008270">
    <property type="term" value="F:zinc ion binding"/>
    <property type="evidence" value="ECO:0007669"/>
    <property type="project" value="InterPro"/>
</dbReference>
<dbReference type="GO" id="GO:1900865">
    <property type="term" value="P:chloroplast RNA modification"/>
    <property type="evidence" value="ECO:0000315"/>
    <property type="project" value="TAIR"/>
</dbReference>
<dbReference type="GO" id="GO:0016554">
    <property type="term" value="P:cytidine to uridine editing"/>
    <property type="evidence" value="ECO:0000315"/>
    <property type="project" value="TAIR"/>
</dbReference>
<dbReference type="FunFam" id="1.25.40.10:FF:000333">
    <property type="entry name" value="Pentatricopeptide repeat-containing protein"/>
    <property type="match status" value="1"/>
</dbReference>
<dbReference type="FunFam" id="1.25.40.10:FF:000715">
    <property type="entry name" value="Pentatricopeptide repeat-containing protein"/>
    <property type="match status" value="1"/>
</dbReference>
<dbReference type="FunFam" id="1.25.40.10:FF:000470">
    <property type="entry name" value="Pentatricopeptide repeat-containing protein At5g66520"/>
    <property type="match status" value="1"/>
</dbReference>
<dbReference type="Gene3D" id="1.25.40.10">
    <property type="entry name" value="Tetratricopeptide repeat domain"/>
    <property type="match status" value="3"/>
</dbReference>
<dbReference type="InterPro" id="IPR032867">
    <property type="entry name" value="DYW_dom"/>
</dbReference>
<dbReference type="InterPro" id="IPR046848">
    <property type="entry name" value="E_motif"/>
</dbReference>
<dbReference type="InterPro" id="IPR046849">
    <property type="entry name" value="Eplus_motif"/>
</dbReference>
<dbReference type="InterPro" id="IPR002885">
    <property type="entry name" value="Pentatricopeptide_rpt"/>
</dbReference>
<dbReference type="InterPro" id="IPR046960">
    <property type="entry name" value="PPR_At4g14850-like_plant"/>
</dbReference>
<dbReference type="InterPro" id="IPR011990">
    <property type="entry name" value="TPR-like_helical_dom_sf"/>
</dbReference>
<dbReference type="NCBIfam" id="TIGR00756">
    <property type="entry name" value="PPR"/>
    <property type="match status" value="4"/>
</dbReference>
<dbReference type="PANTHER" id="PTHR47926">
    <property type="entry name" value="PENTATRICOPEPTIDE REPEAT-CONTAINING PROTEIN"/>
    <property type="match status" value="1"/>
</dbReference>
<dbReference type="PANTHER" id="PTHR47926:SF463">
    <property type="entry name" value="PENTATRICOPEPTIDE REPEAT-CONTAINING PROTEIN"/>
    <property type="match status" value="1"/>
</dbReference>
<dbReference type="Pfam" id="PF14432">
    <property type="entry name" value="DYW_deaminase"/>
    <property type="match status" value="1"/>
</dbReference>
<dbReference type="Pfam" id="PF20431">
    <property type="entry name" value="E_motif"/>
    <property type="match status" value="1"/>
</dbReference>
<dbReference type="Pfam" id="PF20430">
    <property type="entry name" value="Eplus_motif"/>
    <property type="match status" value="1"/>
</dbReference>
<dbReference type="Pfam" id="PF01535">
    <property type="entry name" value="PPR"/>
    <property type="match status" value="4"/>
</dbReference>
<dbReference type="Pfam" id="PF13041">
    <property type="entry name" value="PPR_2"/>
    <property type="match status" value="2"/>
</dbReference>
<dbReference type="PROSITE" id="PS51375">
    <property type="entry name" value="PPR"/>
    <property type="match status" value="10"/>
</dbReference>
<protein>
    <recommendedName>
        <fullName>Pentatricopeptide repeat-containing protein At5g66520</fullName>
    </recommendedName>
</protein>
<accession>Q9FJY7</accession>
<reference key="1">
    <citation type="journal article" date="1998" name="DNA Res.">
        <title>Structural analysis of Arabidopsis thaliana chromosome 5. VI. Sequence features of the regions of 1,367,185 bp covered by 19 physically assigned P1 and TAC clones.</title>
        <authorList>
            <person name="Kotani H."/>
            <person name="Nakamura Y."/>
            <person name="Sato S."/>
            <person name="Asamizu E."/>
            <person name="Kaneko T."/>
            <person name="Miyajima N."/>
            <person name="Tabata S."/>
        </authorList>
    </citation>
    <scope>NUCLEOTIDE SEQUENCE [LARGE SCALE GENOMIC DNA]</scope>
    <source>
        <strain>cv. Columbia</strain>
    </source>
</reference>
<reference key="2">
    <citation type="journal article" date="2017" name="Plant J.">
        <title>Araport11: a complete reannotation of the Arabidopsis thaliana reference genome.</title>
        <authorList>
            <person name="Cheng C.Y."/>
            <person name="Krishnakumar V."/>
            <person name="Chan A.P."/>
            <person name="Thibaud-Nissen F."/>
            <person name="Schobel S."/>
            <person name="Town C.D."/>
        </authorList>
    </citation>
    <scope>GENOME REANNOTATION</scope>
    <source>
        <strain>cv. Columbia</strain>
    </source>
</reference>
<reference key="3">
    <citation type="journal article" date="2000" name="Plant Mol. Biol.">
        <title>In Arabidopsis thaliana, 1% of the genome codes for a novel protein family unique to plants.</title>
        <authorList>
            <person name="Aubourg S."/>
            <person name="Boudet N."/>
            <person name="Kreis M."/>
            <person name="Lecharny A."/>
        </authorList>
    </citation>
    <scope>GENE FAMILY</scope>
</reference>
<reference key="4">
    <citation type="journal article" date="2004" name="Plant Cell">
        <title>Genome-wide analysis of Arabidopsis pentatricopeptide repeat proteins reveals their essential role in organelle biogenesis.</title>
        <authorList>
            <person name="Lurin C."/>
            <person name="Andres C."/>
            <person name="Aubourg S."/>
            <person name="Bellaoui M."/>
            <person name="Bitton F."/>
            <person name="Bruyere C."/>
            <person name="Caboche M."/>
            <person name="Debast C."/>
            <person name="Gualberto J."/>
            <person name="Hoffmann B."/>
            <person name="Lecharny A."/>
            <person name="Le Ret M."/>
            <person name="Martin-Magniette M.-L."/>
            <person name="Mireau H."/>
            <person name="Peeters N."/>
            <person name="Renou J.-P."/>
            <person name="Szurek B."/>
            <person name="Taconnat L."/>
            <person name="Small I."/>
        </authorList>
    </citation>
    <scope>GENE FAMILY</scope>
</reference>
<name>PP449_ARATH</name>
<evidence type="ECO:0000305" key="1"/>
<organism>
    <name type="scientific">Arabidopsis thaliana</name>
    <name type="common">Mouse-ear cress</name>
    <dbReference type="NCBI Taxonomy" id="3702"/>
    <lineage>
        <taxon>Eukaryota</taxon>
        <taxon>Viridiplantae</taxon>
        <taxon>Streptophyta</taxon>
        <taxon>Embryophyta</taxon>
        <taxon>Tracheophyta</taxon>
        <taxon>Spermatophyta</taxon>
        <taxon>Magnoliopsida</taxon>
        <taxon>eudicotyledons</taxon>
        <taxon>Gunneridae</taxon>
        <taxon>Pentapetalae</taxon>
        <taxon>rosids</taxon>
        <taxon>malvids</taxon>
        <taxon>Brassicales</taxon>
        <taxon>Brassicaceae</taxon>
        <taxon>Camelineae</taxon>
        <taxon>Arabidopsis</taxon>
    </lineage>
</organism>
<proteinExistence type="evidence at transcript level"/>